<organism>
    <name type="scientific">Cronobacter sakazakii (strain ATCC BAA-894)</name>
    <name type="common">Enterobacter sakazakii</name>
    <dbReference type="NCBI Taxonomy" id="290339"/>
    <lineage>
        <taxon>Bacteria</taxon>
        <taxon>Pseudomonadati</taxon>
        <taxon>Pseudomonadota</taxon>
        <taxon>Gammaproteobacteria</taxon>
        <taxon>Enterobacterales</taxon>
        <taxon>Enterobacteriaceae</taxon>
        <taxon>Cronobacter</taxon>
    </lineage>
</organism>
<proteinExistence type="inferred from homology"/>
<feature type="chain" id="PRO_1000069501" description="3-ketoacyl-CoA thiolase">
    <location>
        <begin position="1"/>
        <end position="436"/>
    </location>
</feature>
<feature type="active site" description="Acyl-thioester intermediate" evidence="1">
    <location>
        <position position="99"/>
    </location>
</feature>
<feature type="active site" description="Proton acceptor" evidence="1">
    <location>
        <position position="392"/>
    </location>
</feature>
<feature type="active site" description="Proton acceptor" evidence="1">
    <location>
        <position position="422"/>
    </location>
</feature>
<comment type="function">
    <text evidence="1">Catalyzes the final step of fatty acid oxidation in which acetyl-CoA is released and the CoA ester of a fatty acid two carbons shorter is formed.</text>
</comment>
<comment type="catalytic activity">
    <reaction evidence="1">
        <text>an acyl-CoA + acetyl-CoA = a 3-oxoacyl-CoA + CoA</text>
        <dbReference type="Rhea" id="RHEA:21564"/>
        <dbReference type="ChEBI" id="CHEBI:57287"/>
        <dbReference type="ChEBI" id="CHEBI:57288"/>
        <dbReference type="ChEBI" id="CHEBI:58342"/>
        <dbReference type="ChEBI" id="CHEBI:90726"/>
        <dbReference type="EC" id="2.3.1.16"/>
    </reaction>
</comment>
<comment type="pathway">
    <text evidence="1">Lipid metabolism; fatty acid beta-oxidation.</text>
</comment>
<comment type="subunit">
    <text evidence="1">Heterotetramer of two alpha chains (FadJ) and two beta chains (FadI).</text>
</comment>
<comment type="subcellular location">
    <subcellularLocation>
        <location evidence="1">Cytoplasm</location>
    </subcellularLocation>
</comment>
<comment type="similarity">
    <text evidence="1">Belongs to the thiolase-like superfamily. Thiolase family.</text>
</comment>
<evidence type="ECO:0000255" key="1">
    <source>
        <dbReference type="HAMAP-Rule" id="MF_01618"/>
    </source>
</evidence>
<accession>A7MH80</accession>
<gene>
    <name evidence="1" type="primary">fadI</name>
    <name type="ordered locus">ESA_00881</name>
</gene>
<name>FADI_CROS8</name>
<sequence length="436" mass="46525">MSQALPLVTRQGDRIAIVSGLRTPFARQATAYHGVPAVDLGKMVVGELLARSEIPPEVIEQLVFGQVVQMPEAPNIAREIVLGTGMSVHTDAYSVSRACATSFQAVANVAESLMAGTIRAGIAGGADSSSVLPIGVSKKLARTLVDANKARTAGQRLKLFSRLRLRDLLPVPPAVAEYSTGLRMGDTAEQMAKTHGITREQQDALAHRSHQLAAQAWAEGKLREEVMTAYTPPYREPLSEDNNIRKTSSLADYAKLRPAFDRKHGTVTAANSTPLTDGAAAVILMTESRARELGLTPLGYLRSYAFTAVDVWQDMLLGPAWSTPLALERAGLTMADLTLIDMHEAFASQTLTNLKLMASDRFAREVLGRSQATGEVDESKFNVLGGSIAYGHPFAATGARMITQTLNELRRRGGGFGLVTACAAGGLGAAMVLEAE</sequence>
<protein>
    <recommendedName>
        <fullName evidence="1">3-ketoacyl-CoA thiolase</fullName>
        <ecNumber evidence="1">2.3.1.16</ecNumber>
    </recommendedName>
    <alternativeName>
        <fullName evidence="1">ACSs</fullName>
    </alternativeName>
    <alternativeName>
        <fullName evidence="1">Acetyl-CoA acyltransferase</fullName>
    </alternativeName>
    <alternativeName>
        <fullName evidence="1">Acyl-CoA ligase</fullName>
    </alternativeName>
    <alternativeName>
        <fullName evidence="1">Beta-ketothiolase</fullName>
    </alternativeName>
    <alternativeName>
        <fullName evidence="1">Fatty acid oxidation complex subunit beta</fullName>
    </alternativeName>
</protein>
<dbReference type="EC" id="2.3.1.16" evidence="1"/>
<dbReference type="EMBL" id="CP000783">
    <property type="protein sequence ID" value="ABU76151.1"/>
    <property type="molecule type" value="Genomic_DNA"/>
</dbReference>
<dbReference type="RefSeq" id="WP_012124132.1">
    <property type="nucleotide sequence ID" value="NC_009778.1"/>
</dbReference>
<dbReference type="SMR" id="A7MH80"/>
<dbReference type="KEGG" id="esa:ESA_00881"/>
<dbReference type="PATRIC" id="fig|290339.8.peg.781"/>
<dbReference type="HOGENOM" id="CLU_031026_2_0_6"/>
<dbReference type="UniPathway" id="UPA00659"/>
<dbReference type="Proteomes" id="UP000000260">
    <property type="component" value="Chromosome"/>
</dbReference>
<dbReference type="GO" id="GO:0005829">
    <property type="term" value="C:cytosol"/>
    <property type="evidence" value="ECO:0007669"/>
    <property type="project" value="TreeGrafter"/>
</dbReference>
<dbReference type="GO" id="GO:0003988">
    <property type="term" value="F:acetyl-CoA C-acyltransferase activity"/>
    <property type="evidence" value="ECO:0007669"/>
    <property type="project" value="UniProtKB-UniRule"/>
</dbReference>
<dbReference type="GO" id="GO:0006635">
    <property type="term" value="P:fatty acid beta-oxidation"/>
    <property type="evidence" value="ECO:0007669"/>
    <property type="project" value="UniProtKB-UniRule"/>
</dbReference>
<dbReference type="CDD" id="cd00751">
    <property type="entry name" value="thiolase"/>
    <property type="match status" value="1"/>
</dbReference>
<dbReference type="FunFam" id="3.40.47.10:FF:000011">
    <property type="entry name" value="3-ketoacyl-CoA thiolase"/>
    <property type="match status" value="1"/>
</dbReference>
<dbReference type="Gene3D" id="3.40.47.10">
    <property type="match status" value="1"/>
</dbReference>
<dbReference type="HAMAP" id="MF_01618">
    <property type="entry name" value="FadI"/>
    <property type="match status" value="1"/>
</dbReference>
<dbReference type="InterPro" id="IPR012806">
    <property type="entry name" value="Ac-CoA_C-AcTrfase_FadI"/>
</dbReference>
<dbReference type="InterPro" id="IPR002155">
    <property type="entry name" value="Thiolase"/>
</dbReference>
<dbReference type="InterPro" id="IPR016039">
    <property type="entry name" value="Thiolase-like"/>
</dbReference>
<dbReference type="InterPro" id="IPR020615">
    <property type="entry name" value="Thiolase_acyl_enz_int_AS"/>
</dbReference>
<dbReference type="InterPro" id="IPR020610">
    <property type="entry name" value="Thiolase_AS"/>
</dbReference>
<dbReference type="InterPro" id="IPR020617">
    <property type="entry name" value="Thiolase_C"/>
</dbReference>
<dbReference type="InterPro" id="IPR020613">
    <property type="entry name" value="Thiolase_CS"/>
</dbReference>
<dbReference type="InterPro" id="IPR020616">
    <property type="entry name" value="Thiolase_N"/>
</dbReference>
<dbReference type="NCBIfam" id="TIGR01930">
    <property type="entry name" value="AcCoA-C-Actrans"/>
    <property type="match status" value="1"/>
</dbReference>
<dbReference type="NCBIfam" id="TIGR02446">
    <property type="entry name" value="FadI"/>
    <property type="match status" value="1"/>
</dbReference>
<dbReference type="NCBIfam" id="NF006516">
    <property type="entry name" value="PRK08963.1"/>
    <property type="match status" value="1"/>
</dbReference>
<dbReference type="PANTHER" id="PTHR18919:SF107">
    <property type="entry name" value="ACETYL-COA ACETYLTRANSFERASE, CYTOSOLIC"/>
    <property type="match status" value="1"/>
</dbReference>
<dbReference type="PANTHER" id="PTHR18919">
    <property type="entry name" value="ACETYL-COA C-ACYLTRANSFERASE"/>
    <property type="match status" value="1"/>
</dbReference>
<dbReference type="Pfam" id="PF02803">
    <property type="entry name" value="Thiolase_C"/>
    <property type="match status" value="1"/>
</dbReference>
<dbReference type="Pfam" id="PF00108">
    <property type="entry name" value="Thiolase_N"/>
    <property type="match status" value="1"/>
</dbReference>
<dbReference type="PIRSF" id="PIRSF000429">
    <property type="entry name" value="Ac-CoA_Ac_transf"/>
    <property type="match status" value="1"/>
</dbReference>
<dbReference type="SUPFAM" id="SSF53901">
    <property type="entry name" value="Thiolase-like"/>
    <property type="match status" value="2"/>
</dbReference>
<dbReference type="PROSITE" id="PS00098">
    <property type="entry name" value="THIOLASE_1"/>
    <property type="match status" value="1"/>
</dbReference>
<dbReference type="PROSITE" id="PS00737">
    <property type="entry name" value="THIOLASE_2"/>
    <property type="match status" value="1"/>
</dbReference>
<dbReference type="PROSITE" id="PS00099">
    <property type="entry name" value="THIOLASE_3"/>
    <property type="match status" value="1"/>
</dbReference>
<reference key="1">
    <citation type="journal article" date="2010" name="PLoS ONE">
        <title>Genome sequence of Cronobacter sakazakii BAA-894 and comparative genomic hybridization analysis with other Cronobacter species.</title>
        <authorList>
            <person name="Kucerova E."/>
            <person name="Clifton S.W."/>
            <person name="Xia X.Q."/>
            <person name="Long F."/>
            <person name="Porwollik S."/>
            <person name="Fulton L."/>
            <person name="Fronick C."/>
            <person name="Minx P."/>
            <person name="Kyung K."/>
            <person name="Warren W."/>
            <person name="Fulton R."/>
            <person name="Feng D."/>
            <person name="Wollam A."/>
            <person name="Shah N."/>
            <person name="Bhonagiri V."/>
            <person name="Nash W.E."/>
            <person name="Hallsworth-Pepin K."/>
            <person name="Wilson R.K."/>
            <person name="McClelland M."/>
            <person name="Forsythe S.J."/>
        </authorList>
    </citation>
    <scope>NUCLEOTIDE SEQUENCE [LARGE SCALE GENOMIC DNA]</scope>
    <source>
        <strain>ATCC BAA-894</strain>
    </source>
</reference>
<keyword id="KW-0012">Acyltransferase</keyword>
<keyword id="KW-0963">Cytoplasm</keyword>
<keyword id="KW-0276">Fatty acid metabolism</keyword>
<keyword id="KW-0442">Lipid degradation</keyword>
<keyword id="KW-0443">Lipid metabolism</keyword>
<keyword id="KW-1185">Reference proteome</keyword>
<keyword id="KW-0808">Transferase</keyword>